<proteinExistence type="evidence at protein level"/>
<feature type="initiator methionine" description="Removed" evidence="3">
    <location>
        <position position="1"/>
    </location>
</feature>
<feature type="chain" id="PRO_0000079940" description="Phenol 2-monooxygenase, auxiliary component DmpK">
    <location>
        <begin position="2"/>
        <end position="92"/>
    </location>
</feature>
<keyword id="KW-0058">Aromatic hydrocarbons catabolism</keyword>
<keyword id="KW-0614">Plasmid</keyword>
<reference key="1">
    <citation type="journal article" date="1990" name="J. Bacteriol.">
        <title>Complete nucleotide sequence and polypeptide analysis of multicomponent phenol hydroxylase from Pseudomonas sp. strain CF600.</title>
        <authorList>
            <person name="Nordlund I."/>
            <person name="Powlowski J."/>
            <person name="Shingler V."/>
        </authorList>
    </citation>
    <scope>NUCLEOTIDE SEQUENCE [GENOMIC DNA]</scope>
    <scope>FUNCTION</scope>
    <scope>PATHWAY</scope>
    <scope>DISRUPTION PHENOTYPE</scope>
    <source>
        <strain>CF600</strain>
    </source>
</reference>
<reference key="2">
    <citation type="submission" date="1994-03" db="EMBL/GenBank/DDBJ databases">
        <authorList>
            <person name="Takeo M."/>
            <person name="Maeda Y."/>
            <person name="Okada H."/>
            <person name="Miyama K."/>
            <person name="Mori K."/>
            <person name="Ike M."/>
            <person name="Fujita M."/>
        </authorList>
    </citation>
    <scope>NUCLEOTIDE SEQUENCE [GENOMIC DNA]</scope>
    <source>
        <strain>BH</strain>
    </source>
</reference>
<reference key="3">
    <citation type="journal article" date="1990" name="J. Bacteriol.">
        <title>In vitro analysis of polypeptide requirements of multicomponent phenol hydroxylase from Pseudomonas sp. strain CF600.</title>
        <authorList>
            <person name="Powlowski J."/>
            <person name="Shingler V."/>
        </authorList>
    </citation>
    <scope>FUNCTION</scope>
    <source>
        <strain>CF600</strain>
    </source>
</reference>
<reference key="4">
    <citation type="journal article" date="1997" name="J. Biol. Chem.">
        <title>On the role of DmpK, an auxiliary protein associated with multicomponent phenol hydroxylase from Pseudomonas sp. strain CF600.</title>
        <authorList>
            <person name="Powlowski J."/>
            <person name="Sealy J."/>
            <person name="Shingler V."/>
            <person name="Cadieux E."/>
        </authorList>
    </citation>
    <scope>FUNCTION</scope>
    <scope>SUBUNIT</scope>
    <scope>INTERACTION WITH DMPL AND DMPN</scope>
    <scope>MASS SPECTROMETRY</scope>
    <source>
        <strain>CF600</strain>
    </source>
</reference>
<comment type="function">
    <text evidence="1 2 3">DmpK is an auxiliary protein associated with the multicomponent phenol hydroxylase DmpLMNOP and it may be involved in the post-translational incorporation of iron into the oxygenase component of the phenol hydroxylase (PubMed:8995386). Required for growth on phenol but not for in vitro phenol hydroxylase activity (PubMed:2254258, PubMed:2254259).</text>
</comment>
<comment type="pathway">
    <text evidence="1">Aromatic compound metabolism; phenol degradation.</text>
</comment>
<comment type="subunit">
    <text evidence="3">Homotrimer or homotetramer (PubMed:8995386). Interacts with the phenol hydroxylase components DmpL (P1 component) and DmpN (P3 component) (PubMed:8995386).</text>
</comment>
<comment type="mass spectrometry" mass="10451.0" method="Electrospray" evidence="3"/>
<comment type="disruption phenotype">
    <text evidence="1">Cells lacking this gene cannot grow on phenol.</text>
</comment>
<protein>
    <recommendedName>
        <fullName evidence="5">Phenol 2-monooxygenase, auxiliary component DmpK</fullName>
    </recommendedName>
    <alternativeName>
        <fullName>Phenol 2-monooxygenase P0 component</fullName>
    </alternativeName>
    <alternativeName>
        <fullName>Phenol hydroxylase P0 protein</fullName>
    </alternativeName>
</protein>
<sequence length="92" mass="10586">MTVTNTPTPTFDQLTRYIRVRSEPEAKFVEFDFAIGHPELFVELVLPQDAFVKFCQHNRVVAMDEAMAKAVDDDMVKWRFGDVGRRLPKDPG</sequence>
<dbReference type="EMBL" id="M60276">
    <property type="protein sequence ID" value="AAA25939.1"/>
    <property type="molecule type" value="Genomic_DNA"/>
</dbReference>
<dbReference type="EMBL" id="D28864">
    <property type="protein sequence ID" value="BAA06014.1"/>
    <property type="molecule type" value="Genomic_DNA"/>
</dbReference>
<dbReference type="BioCyc" id="MetaCyc:MONOMER-12794"/>
<dbReference type="BRENDA" id="1.14.13.244">
    <property type="organism ID" value="16277"/>
</dbReference>
<dbReference type="UniPathway" id="UPA00728"/>
<dbReference type="GO" id="GO:0018662">
    <property type="term" value="F:phenol 2-monooxygenase activity"/>
    <property type="evidence" value="ECO:0007669"/>
    <property type="project" value="UniProtKB-EC"/>
</dbReference>
<dbReference type="GO" id="GO:0019336">
    <property type="term" value="P:phenol-containing compound catabolic process"/>
    <property type="evidence" value="ECO:0007669"/>
    <property type="project" value="UniProtKB-UniPathway"/>
</dbReference>
<dbReference type="InterPro" id="IPR010353">
    <property type="entry name" value="DmpK"/>
</dbReference>
<dbReference type="Pfam" id="PF06099">
    <property type="entry name" value="Phenol_hyd_sub"/>
    <property type="match status" value="1"/>
</dbReference>
<dbReference type="PIRSF" id="PIRSF000039">
    <property type="entry name" value="Phenol_monooxy_K"/>
    <property type="match status" value="1"/>
</dbReference>
<organism>
    <name type="scientific">Pseudomonas sp. (strain CF600)</name>
    <dbReference type="NCBI Taxonomy" id="79676"/>
    <lineage>
        <taxon>Bacteria</taxon>
        <taxon>Pseudomonadati</taxon>
        <taxon>Pseudomonadota</taxon>
    </lineage>
</organism>
<gene>
    <name evidence="4" type="primary">dmpK</name>
    <name type="synonym">pheA1</name>
</gene>
<geneLocation type="plasmid">
    <name>pVI150</name>
</geneLocation>
<accession>P19729</accession>
<evidence type="ECO:0000269" key="1">
    <source>
    </source>
</evidence>
<evidence type="ECO:0000269" key="2">
    <source>
    </source>
</evidence>
<evidence type="ECO:0000269" key="3">
    <source>
    </source>
</evidence>
<evidence type="ECO:0000303" key="4">
    <source>
    </source>
</evidence>
<evidence type="ECO:0000305" key="5"/>
<name>DMPK_PSEUF</name>